<reference key="1">
    <citation type="submission" date="2006-11" db="EMBL/GenBank/DDBJ databases">
        <title>Identification and characterization of a new conjugation/ type IVA secretion system (trb/tra) of L. pneumophila Corby localized on a mobile genomic island.</title>
        <authorList>
            <person name="Gloeckner G."/>
            <person name="Albert-Weissenberger C."/>
            <person name="Weinmann E."/>
            <person name="Jacobi S."/>
            <person name="Schunder E."/>
            <person name="Steinert M."/>
            <person name="Buchrieser C."/>
            <person name="Hacker J."/>
            <person name="Heuner K."/>
        </authorList>
    </citation>
    <scope>NUCLEOTIDE SEQUENCE [LARGE SCALE GENOMIC DNA]</scope>
    <source>
        <strain>Corby</strain>
    </source>
</reference>
<keyword id="KW-0066">ATP synthesis</keyword>
<keyword id="KW-0067">ATP-binding</keyword>
<keyword id="KW-0997">Cell inner membrane</keyword>
<keyword id="KW-1003">Cell membrane</keyword>
<keyword id="KW-0139">CF(1)</keyword>
<keyword id="KW-0375">Hydrogen ion transport</keyword>
<keyword id="KW-0406">Ion transport</keyword>
<keyword id="KW-0472">Membrane</keyword>
<keyword id="KW-0547">Nucleotide-binding</keyword>
<keyword id="KW-1278">Translocase</keyword>
<keyword id="KW-0813">Transport</keyword>
<feature type="chain" id="PRO_0000339035" description="ATP synthase subunit alpha 1">
    <location>
        <begin position="1"/>
        <end position="490"/>
    </location>
</feature>
<feature type="binding site" evidence="1">
    <location>
        <begin position="171"/>
        <end position="178"/>
    </location>
    <ligand>
        <name>ATP</name>
        <dbReference type="ChEBI" id="CHEBI:30616"/>
    </ligand>
</feature>
<feature type="site" description="Required for activity" evidence="1">
    <location>
        <position position="364"/>
    </location>
</feature>
<dbReference type="EC" id="7.1.2.2" evidence="1"/>
<dbReference type="EMBL" id="CP000675">
    <property type="protein sequence ID" value="ABQ56149.1"/>
    <property type="molecule type" value="Genomic_DNA"/>
</dbReference>
<dbReference type="RefSeq" id="WP_011946146.1">
    <property type="nucleotide sequence ID" value="NC_009494.2"/>
</dbReference>
<dbReference type="SMR" id="A5IFJ9"/>
<dbReference type="KEGG" id="lpc:LPC_2225"/>
<dbReference type="HOGENOM" id="CLU_010091_2_1_6"/>
<dbReference type="GO" id="GO:0005886">
    <property type="term" value="C:plasma membrane"/>
    <property type="evidence" value="ECO:0007669"/>
    <property type="project" value="UniProtKB-SubCell"/>
</dbReference>
<dbReference type="GO" id="GO:0045259">
    <property type="term" value="C:proton-transporting ATP synthase complex"/>
    <property type="evidence" value="ECO:0007669"/>
    <property type="project" value="UniProtKB-KW"/>
</dbReference>
<dbReference type="GO" id="GO:0043531">
    <property type="term" value="F:ADP binding"/>
    <property type="evidence" value="ECO:0007669"/>
    <property type="project" value="TreeGrafter"/>
</dbReference>
<dbReference type="GO" id="GO:0005524">
    <property type="term" value="F:ATP binding"/>
    <property type="evidence" value="ECO:0007669"/>
    <property type="project" value="UniProtKB-UniRule"/>
</dbReference>
<dbReference type="GO" id="GO:0046933">
    <property type="term" value="F:proton-transporting ATP synthase activity, rotational mechanism"/>
    <property type="evidence" value="ECO:0007669"/>
    <property type="project" value="UniProtKB-UniRule"/>
</dbReference>
<dbReference type="CDD" id="cd18113">
    <property type="entry name" value="ATP-synt_F1_alpha_C"/>
    <property type="match status" value="1"/>
</dbReference>
<dbReference type="CDD" id="cd18116">
    <property type="entry name" value="ATP-synt_F1_alpha_N"/>
    <property type="match status" value="1"/>
</dbReference>
<dbReference type="CDD" id="cd01132">
    <property type="entry name" value="F1-ATPase_alpha_CD"/>
    <property type="match status" value="1"/>
</dbReference>
<dbReference type="FunFam" id="3.40.50.300:FF:002432">
    <property type="entry name" value="ATP synthase subunit alpha, mitochondrial"/>
    <property type="match status" value="1"/>
</dbReference>
<dbReference type="Gene3D" id="2.40.30.20">
    <property type="match status" value="1"/>
</dbReference>
<dbReference type="Gene3D" id="1.20.150.20">
    <property type="entry name" value="ATP synthase alpha/beta chain, C-terminal domain"/>
    <property type="match status" value="1"/>
</dbReference>
<dbReference type="Gene3D" id="3.40.50.300">
    <property type="entry name" value="P-loop containing nucleotide triphosphate hydrolases"/>
    <property type="match status" value="1"/>
</dbReference>
<dbReference type="HAMAP" id="MF_01346">
    <property type="entry name" value="ATP_synth_alpha_bact"/>
    <property type="match status" value="1"/>
</dbReference>
<dbReference type="InterPro" id="IPR023366">
    <property type="entry name" value="ATP_synth_asu-like_sf"/>
</dbReference>
<dbReference type="InterPro" id="IPR000793">
    <property type="entry name" value="ATP_synth_asu_C"/>
</dbReference>
<dbReference type="InterPro" id="IPR038376">
    <property type="entry name" value="ATP_synth_asu_C_sf"/>
</dbReference>
<dbReference type="InterPro" id="IPR033732">
    <property type="entry name" value="ATP_synth_F1_a_nt-bd_dom"/>
</dbReference>
<dbReference type="InterPro" id="IPR005294">
    <property type="entry name" value="ATP_synth_F1_asu"/>
</dbReference>
<dbReference type="InterPro" id="IPR020003">
    <property type="entry name" value="ATPase_a/bsu_AS"/>
</dbReference>
<dbReference type="InterPro" id="IPR036121">
    <property type="entry name" value="ATPase_F1/V1/A1_a/bsu_N_sf"/>
</dbReference>
<dbReference type="InterPro" id="IPR000194">
    <property type="entry name" value="ATPase_F1/V1/A1_a/bsu_nucl-bd"/>
</dbReference>
<dbReference type="InterPro" id="IPR027417">
    <property type="entry name" value="P-loop_NTPase"/>
</dbReference>
<dbReference type="NCBIfam" id="TIGR00962">
    <property type="entry name" value="atpA"/>
    <property type="match status" value="1"/>
</dbReference>
<dbReference type="NCBIfam" id="NF009884">
    <property type="entry name" value="PRK13343.1"/>
    <property type="match status" value="1"/>
</dbReference>
<dbReference type="PANTHER" id="PTHR48082">
    <property type="entry name" value="ATP SYNTHASE SUBUNIT ALPHA, MITOCHONDRIAL"/>
    <property type="match status" value="1"/>
</dbReference>
<dbReference type="PANTHER" id="PTHR48082:SF2">
    <property type="entry name" value="ATP SYNTHASE SUBUNIT ALPHA, MITOCHONDRIAL"/>
    <property type="match status" value="1"/>
</dbReference>
<dbReference type="Pfam" id="PF00006">
    <property type="entry name" value="ATP-synt_ab"/>
    <property type="match status" value="1"/>
</dbReference>
<dbReference type="Pfam" id="PF00306">
    <property type="entry name" value="ATP-synt_ab_C"/>
    <property type="match status" value="1"/>
</dbReference>
<dbReference type="SUPFAM" id="SSF47917">
    <property type="entry name" value="C-terminal domain of alpha and beta subunits of F1 ATP synthase"/>
    <property type="match status" value="1"/>
</dbReference>
<dbReference type="SUPFAM" id="SSF50615">
    <property type="entry name" value="N-terminal domain of alpha and beta subunits of F1 ATP synthase"/>
    <property type="match status" value="1"/>
</dbReference>
<dbReference type="SUPFAM" id="SSF52540">
    <property type="entry name" value="P-loop containing nucleoside triphosphate hydrolases"/>
    <property type="match status" value="1"/>
</dbReference>
<dbReference type="PROSITE" id="PS00152">
    <property type="entry name" value="ATPASE_ALPHA_BETA"/>
    <property type="match status" value="1"/>
</dbReference>
<protein>
    <recommendedName>
        <fullName evidence="1">ATP synthase subunit alpha 1</fullName>
        <ecNumber evidence="1">7.1.2.2</ecNumber>
    </recommendedName>
    <alternativeName>
        <fullName evidence="1">ATP synthase F1 sector subunit alpha 1</fullName>
    </alternativeName>
    <alternativeName>
        <fullName evidence="1">F-ATPase subunit alpha 1</fullName>
    </alternativeName>
</protein>
<comment type="function">
    <text evidence="1">Produces ATP from ADP in the presence of a proton gradient across the membrane. The alpha chain is a regulatory subunit.</text>
</comment>
<comment type="catalytic activity">
    <reaction evidence="1">
        <text>ATP + H2O + 4 H(+)(in) = ADP + phosphate + 5 H(+)(out)</text>
        <dbReference type="Rhea" id="RHEA:57720"/>
        <dbReference type="ChEBI" id="CHEBI:15377"/>
        <dbReference type="ChEBI" id="CHEBI:15378"/>
        <dbReference type="ChEBI" id="CHEBI:30616"/>
        <dbReference type="ChEBI" id="CHEBI:43474"/>
        <dbReference type="ChEBI" id="CHEBI:456216"/>
        <dbReference type="EC" id="7.1.2.2"/>
    </reaction>
</comment>
<comment type="subunit">
    <text evidence="1">F-type ATPases have 2 components, CF(1) - the catalytic core - and CF(0) - the membrane proton channel. CF(1) has five subunits: alpha(3), beta(3), gamma(1), delta(1), epsilon(1). CF(0) has three main subunits: a(1), b(2) and c(9-12). The alpha and beta chains form an alternating ring which encloses part of the gamma chain. CF(1) is attached to CF(0) by a central stalk formed by the gamma and epsilon chains, while a peripheral stalk is formed by the delta and b chains.</text>
</comment>
<comment type="subcellular location">
    <subcellularLocation>
        <location evidence="1">Cell inner membrane</location>
        <topology evidence="1">Peripheral membrane protein</topology>
    </subcellularLocation>
</comment>
<comment type="similarity">
    <text evidence="1">Belongs to the ATPase alpha/beta chains family.</text>
</comment>
<sequence length="490" mass="54905">MNWSNTPSFLEKQRQRLKRYQFQIKVSEQGRVVSVGDGIIWIKGLPGAAIDEILISEDECCIAMVFHLTEELVGAVMLVQTKKLKAGTPIFPLKRVLSIPVGDKLLGRVIDPLGHPLDGGEIPPHEEQGLLDRLSPHILHRDFVNRPLYTGNKMLDNLIPIGKGQRELLIGDNGLGKSALALDIVMNQKDKKVYCVYVLIGQKRSTVSSTIQLLKKANALDYTTVVVAQATALPGLLYLAPFAGCAIAEHWMKKGLDTLVVYDDLSAHANSYRELSLLLRRPPGREAFPADIFYLHSRLLERSTCLSPAMGGGSMTALPIIETKEGEMATYIPTNLISITDGQIFFDESLFSSGFLPAIDITKSVSRVGAKAQHPQIKKESGRMKLDYLQFLDLELFTRFGAKLDAKMQKQIQKGRVLREILKQERFSPLPIEFQLAWLIAYNEGFFDESNLEDIPQILKKIEKEIKQSNLSLGSPREQWKKAIKEWLMA</sequence>
<accession>A5IFJ9</accession>
<name>ATPA1_LEGPC</name>
<organism>
    <name type="scientific">Legionella pneumophila (strain Corby)</name>
    <dbReference type="NCBI Taxonomy" id="400673"/>
    <lineage>
        <taxon>Bacteria</taxon>
        <taxon>Pseudomonadati</taxon>
        <taxon>Pseudomonadota</taxon>
        <taxon>Gammaproteobacteria</taxon>
        <taxon>Legionellales</taxon>
        <taxon>Legionellaceae</taxon>
        <taxon>Legionella</taxon>
    </lineage>
</organism>
<proteinExistence type="inferred from homology"/>
<gene>
    <name evidence="1" type="primary">atpA1</name>
    <name type="ordered locus">LPC_2225</name>
</gene>
<evidence type="ECO:0000255" key="1">
    <source>
        <dbReference type="HAMAP-Rule" id="MF_01346"/>
    </source>
</evidence>